<protein>
    <recommendedName>
        <fullName evidence="1">Trigger factor</fullName>
        <shortName evidence="1">TF</shortName>
        <ecNumber evidence="1">5.2.1.8</ecNumber>
    </recommendedName>
    <alternativeName>
        <fullName evidence="1">PPIase</fullName>
    </alternativeName>
</protein>
<comment type="function">
    <text evidence="1">Involved in protein export. Acts as a chaperone by maintaining the newly synthesized protein in an open conformation. Functions as a peptidyl-prolyl cis-trans isomerase.</text>
</comment>
<comment type="catalytic activity">
    <reaction evidence="1">
        <text>[protein]-peptidylproline (omega=180) = [protein]-peptidylproline (omega=0)</text>
        <dbReference type="Rhea" id="RHEA:16237"/>
        <dbReference type="Rhea" id="RHEA-COMP:10747"/>
        <dbReference type="Rhea" id="RHEA-COMP:10748"/>
        <dbReference type="ChEBI" id="CHEBI:83833"/>
        <dbReference type="ChEBI" id="CHEBI:83834"/>
        <dbReference type="EC" id="5.2.1.8"/>
    </reaction>
</comment>
<comment type="subcellular location">
    <subcellularLocation>
        <location>Cytoplasm</location>
    </subcellularLocation>
    <text evidence="1">About half TF is bound to the ribosome near the polypeptide exit tunnel while the other half is free in the cytoplasm.</text>
</comment>
<comment type="domain">
    <text evidence="1">Consists of 3 domains; the N-terminus binds the ribosome, the middle domain has PPIase activity, while the C-terminus has intrinsic chaperone activity on its own.</text>
</comment>
<comment type="similarity">
    <text evidence="1">Belongs to the FKBP-type PPIase family. Tig subfamily.</text>
</comment>
<reference key="1">
    <citation type="journal article" date="2008" name="BMC Genomics">
        <title>Genomics of an extreme psychrophile, Psychromonas ingrahamii.</title>
        <authorList>
            <person name="Riley M."/>
            <person name="Staley J.T."/>
            <person name="Danchin A."/>
            <person name="Wang T.Z."/>
            <person name="Brettin T.S."/>
            <person name="Hauser L.J."/>
            <person name="Land M.L."/>
            <person name="Thompson L.S."/>
        </authorList>
    </citation>
    <scope>NUCLEOTIDE SEQUENCE [LARGE SCALE GENOMIC DNA]</scope>
    <source>
        <strain>DSM 17664 / CCUG 51855 / 37</strain>
    </source>
</reference>
<organism>
    <name type="scientific">Psychromonas ingrahamii (strain DSM 17664 / CCUG 51855 / 37)</name>
    <dbReference type="NCBI Taxonomy" id="357804"/>
    <lineage>
        <taxon>Bacteria</taxon>
        <taxon>Pseudomonadati</taxon>
        <taxon>Pseudomonadota</taxon>
        <taxon>Gammaproteobacteria</taxon>
        <taxon>Alteromonadales</taxon>
        <taxon>Psychromonadaceae</taxon>
        <taxon>Psychromonas</taxon>
    </lineage>
</organism>
<accession>A1SUW6</accession>
<feature type="chain" id="PRO_1000022738" description="Trigger factor">
    <location>
        <begin position="1"/>
        <end position="435"/>
    </location>
</feature>
<feature type="domain" description="PPIase FKBP-type" evidence="1">
    <location>
        <begin position="161"/>
        <end position="246"/>
    </location>
</feature>
<evidence type="ECO:0000255" key="1">
    <source>
        <dbReference type="HAMAP-Rule" id="MF_00303"/>
    </source>
</evidence>
<proteinExistence type="inferred from homology"/>
<sequence length="435" mass="48533">MQVSVESTQGLERKLTVTIAAEAFDKEYNSRVHHLAKTQRVDGFRPGKVPTSVVTKRFGAGIFQEVAGELMQRNFSEAVMAEKLNLAARPNFEPQAREKGQDFTFTATFEVYPEVTLSPLEALSIEKDSAEVTDADLDKMIETLRKQHAEWNAVEREAANDDQVTLDFEGSIDGEVFEGGKAEGFDIVLGSGKMIPGFEAGIVGHAAGSEFTIDVNFPEDYHAEQLKGKAVQFAIKLTKVEEQILPEITPEFVQKFGVENGELETLKHDIKQNMVRELSQALKNSAKDKVLNALVENNEIEIPKALVEDEIVVLRKQAMERYAKEMDPENLPELPAELFKEQAEKRVKVGFLLGEVINVNELTVDQEKVAALIESAASAYDNPAEVIAYYKNNKEMMQNMENVALEEQAVDFIIEKAKVTEVNKSFDEVMNKVVA</sequence>
<keyword id="KW-0131">Cell cycle</keyword>
<keyword id="KW-0132">Cell division</keyword>
<keyword id="KW-0143">Chaperone</keyword>
<keyword id="KW-0963">Cytoplasm</keyword>
<keyword id="KW-0413">Isomerase</keyword>
<keyword id="KW-1185">Reference proteome</keyword>
<keyword id="KW-0697">Rotamase</keyword>
<gene>
    <name evidence="1" type="primary">tig</name>
    <name type="ordered locus">Ping_1464</name>
</gene>
<name>TIG_PSYIN</name>
<dbReference type="EC" id="5.2.1.8" evidence="1"/>
<dbReference type="EMBL" id="CP000510">
    <property type="protein sequence ID" value="ABM03281.1"/>
    <property type="molecule type" value="Genomic_DNA"/>
</dbReference>
<dbReference type="RefSeq" id="WP_011769841.1">
    <property type="nucleotide sequence ID" value="NC_008709.1"/>
</dbReference>
<dbReference type="SMR" id="A1SUW6"/>
<dbReference type="STRING" id="357804.Ping_1464"/>
<dbReference type="KEGG" id="pin:Ping_1464"/>
<dbReference type="eggNOG" id="COG0544">
    <property type="taxonomic scope" value="Bacteria"/>
</dbReference>
<dbReference type="HOGENOM" id="CLU_033058_2_0_6"/>
<dbReference type="OrthoDB" id="9767721at2"/>
<dbReference type="Proteomes" id="UP000000639">
    <property type="component" value="Chromosome"/>
</dbReference>
<dbReference type="GO" id="GO:0005737">
    <property type="term" value="C:cytoplasm"/>
    <property type="evidence" value="ECO:0007669"/>
    <property type="project" value="UniProtKB-SubCell"/>
</dbReference>
<dbReference type="GO" id="GO:0003755">
    <property type="term" value="F:peptidyl-prolyl cis-trans isomerase activity"/>
    <property type="evidence" value="ECO:0007669"/>
    <property type="project" value="UniProtKB-UniRule"/>
</dbReference>
<dbReference type="GO" id="GO:0044183">
    <property type="term" value="F:protein folding chaperone"/>
    <property type="evidence" value="ECO:0007669"/>
    <property type="project" value="TreeGrafter"/>
</dbReference>
<dbReference type="GO" id="GO:0043022">
    <property type="term" value="F:ribosome binding"/>
    <property type="evidence" value="ECO:0007669"/>
    <property type="project" value="TreeGrafter"/>
</dbReference>
<dbReference type="GO" id="GO:0051083">
    <property type="term" value="P:'de novo' cotranslational protein folding"/>
    <property type="evidence" value="ECO:0007669"/>
    <property type="project" value="TreeGrafter"/>
</dbReference>
<dbReference type="GO" id="GO:0051301">
    <property type="term" value="P:cell division"/>
    <property type="evidence" value="ECO:0007669"/>
    <property type="project" value="UniProtKB-KW"/>
</dbReference>
<dbReference type="GO" id="GO:0061077">
    <property type="term" value="P:chaperone-mediated protein folding"/>
    <property type="evidence" value="ECO:0007669"/>
    <property type="project" value="TreeGrafter"/>
</dbReference>
<dbReference type="GO" id="GO:0015031">
    <property type="term" value="P:protein transport"/>
    <property type="evidence" value="ECO:0007669"/>
    <property type="project" value="UniProtKB-UniRule"/>
</dbReference>
<dbReference type="GO" id="GO:0043335">
    <property type="term" value="P:protein unfolding"/>
    <property type="evidence" value="ECO:0007669"/>
    <property type="project" value="TreeGrafter"/>
</dbReference>
<dbReference type="FunFam" id="3.10.50.40:FF:000001">
    <property type="entry name" value="Trigger factor"/>
    <property type="match status" value="1"/>
</dbReference>
<dbReference type="Gene3D" id="3.10.50.40">
    <property type="match status" value="1"/>
</dbReference>
<dbReference type="Gene3D" id="3.30.70.1050">
    <property type="entry name" value="Trigger factor ribosome-binding domain"/>
    <property type="match status" value="1"/>
</dbReference>
<dbReference type="Gene3D" id="1.10.3120.10">
    <property type="entry name" value="Trigger factor, C-terminal domain"/>
    <property type="match status" value="1"/>
</dbReference>
<dbReference type="HAMAP" id="MF_00303">
    <property type="entry name" value="Trigger_factor_Tig"/>
    <property type="match status" value="1"/>
</dbReference>
<dbReference type="InterPro" id="IPR046357">
    <property type="entry name" value="PPIase_dom_sf"/>
</dbReference>
<dbReference type="InterPro" id="IPR001179">
    <property type="entry name" value="PPIase_FKBP_dom"/>
</dbReference>
<dbReference type="InterPro" id="IPR005215">
    <property type="entry name" value="Trig_fac"/>
</dbReference>
<dbReference type="InterPro" id="IPR008880">
    <property type="entry name" value="Trigger_fac_C"/>
</dbReference>
<dbReference type="InterPro" id="IPR037041">
    <property type="entry name" value="Trigger_fac_C_sf"/>
</dbReference>
<dbReference type="InterPro" id="IPR008881">
    <property type="entry name" value="Trigger_fac_ribosome-bd_bac"/>
</dbReference>
<dbReference type="InterPro" id="IPR036611">
    <property type="entry name" value="Trigger_fac_ribosome-bd_sf"/>
</dbReference>
<dbReference type="InterPro" id="IPR027304">
    <property type="entry name" value="Trigger_fact/SurA_dom_sf"/>
</dbReference>
<dbReference type="NCBIfam" id="TIGR00115">
    <property type="entry name" value="tig"/>
    <property type="match status" value="1"/>
</dbReference>
<dbReference type="PANTHER" id="PTHR30560">
    <property type="entry name" value="TRIGGER FACTOR CHAPERONE AND PEPTIDYL-PROLYL CIS/TRANS ISOMERASE"/>
    <property type="match status" value="1"/>
</dbReference>
<dbReference type="PANTHER" id="PTHR30560:SF3">
    <property type="entry name" value="TRIGGER FACTOR-LIKE PROTEIN TIG, CHLOROPLASTIC"/>
    <property type="match status" value="1"/>
</dbReference>
<dbReference type="Pfam" id="PF00254">
    <property type="entry name" value="FKBP_C"/>
    <property type="match status" value="1"/>
</dbReference>
<dbReference type="Pfam" id="PF05698">
    <property type="entry name" value="Trigger_C"/>
    <property type="match status" value="1"/>
</dbReference>
<dbReference type="Pfam" id="PF05697">
    <property type="entry name" value="Trigger_N"/>
    <property type="match status" value="1"/>
</dbReference>
<dbReference type="PIRSF" id="PIRSF003095">
    <property type="entry name" value="Trigger_factor"/>
    <property type="match status" value="1"/>
</dbReference>
<dbReference type="SUPFAM" id="SSF54534">
    <property type="entry name" value="FKBP-like"/>
    <property type="match status" value="1"/>
</dbReference>
<dbReference type="SUPFAM" id="SSF109998">
    <property type="entry name" value="Triger factor/SurA peptide-binding domain-like"/>
    <property type="match status" value="1"/>
</dbReference>
<dbReference type="SUPFAM" id="SSF102735">
    <property type="entry name" value="Trigger factor ribosome-binding domain"/>
    <property type="match status" value="1"/>
</dbReference>
<dbReference type="PROSITE" id="PS50059">
    <property type="entry name" value="FKBP_PPIASE"/>
    <property type="match status" value="1"/>
</dbReference>